<gene>
    <name evidence="1" type="primary">rlmM</name>
    <name type="ordered locus">VV1_0303</name>
</gene>
<keyword id="KW-0963">Cytoplasm</keyword>
<keyword id="KW-0489">Methyltransferase</keyword>
<keyword id="KW-0698">rRNA processing</keyword>
<keyword id="KW-0949">S-adenosyl-L-methionine</keyword>
<keyword id="KW-0808">Transferase</keyword>
<protein>
    <recommendedName>
        <fullName evidence="1">Ribosomal RNA large subunit methyltransferase M</fullName>
        <ecNumber evidence="1">2.1.1.186</ecNumber>
    </recommendedName>
    <alternativeName>
        <fullName evidence="1">23S rRNA (cytidine2498-2'-O)-methyltransferase</fullName>
    </alternativeName>
    <alternativeName>
        <fullName evidence="1">23S rRNA 2'-O-ribose methyltransferase RlmM</fullName>
    </alternativeName>
</protein>
<accession>Q8DFB2</accession>
<proteinExistence type="inferred from homology"/>
<sequence>MKQLMLYCRQGFEKECAGEIQDKATQLEVYGFPRVFKNAGYVLFECYQDGDADKLARELDFNALIFARQMFAVAAEFTELPSEDRISPILAELGEIDAFPVCGDLRIETPDTNEAKELLKFCRKFTVPMRQALRGKGLLLAKENAKKPVFHLCFVASGHCFAGYSYSHNNSRFFMGIPRLKFPADAPSRSTLKLEEAFHVFIPREEWDTRLSSGMWAVDLGACPGGWTYQLVQRSMFVHCVDNGMMADSLMETGQIKHHMVDGFKFEPDRKNVTWLVCDMVEKPARVAHLMGEWLIKGWAKETIFNLKLPMKGRYDEVLQDIENLKTFLIENKVKFKLQAKHLYHDREEITVHIQVLSNISPH</sequence>
<evidence type="ECO:0000255" key="1">
    <source>
        <dbReference type="HAMAP-Rule" id="MF_01551"/>
    </source>
</evidence>
<dbReference type="EC" id="2.1.1.186" evidence="1"/>
<dbReference type="EMBL" id="AE016795">
    <property type="protein sequence ID" value="AAO08836.2"/>
    <property type="molecule type" value="Genomic_DNA"/>
</dbReference>
<dbReference type="RefSeq" id="WP_011078411.1">
    <property type="nucleotide sequence ID" value="NC_004459.3"/>
</dbReference>
<dbReference type="SMR" id="Q8DFB2"/>
<dbReference type="KEGG" id="vvu:VV1_0303"/>
<dbReference type="PATRIC" id="fig|196600.6.peg.885"/>
<dbReference type="HOGENOM" id="CLU_043780_0_0_6"/>
<dbReference type="Proteomes" id="UP000002275">
    <property type="component" value="Chromosome 1"/>
</dbReference>
<dbReference type="GO" id="GO:0005737">
    <property type="term" value="C:cytoplasm"/>
    <property type="evidence" value="ECO:0007669"/>
    <property type="project" value="UniProtKB-SubCell"/>
</dbReference>
<dbReference type="GO" id="GO:0008757">
    <property type="term" value="F:S-adenosylmethionine-dependent methyltransferase activity"/>
    <property type="evidence" value="ECO:0007669"/>
    <property type="project" value="UniProtKB-UniRule"/>
</dbReference>
<dbReference type="GO" id="GO:0032259">
    <property type="term" value="P:methylation"/>
    <property type="evidence" value="ECO:0007669"/>
    <property type="project" value="UniProtKB-KW"/>
</dbReference>
<dbReference type="GO" id="GO:0006364">
    <property type="term" value="P:rRNA processing"/>
    <property type="evidence" value="ECO:0007669"/>
    <property type="project" value="UniProtKB-UniRule"/>
</dbReference>
<dbReference type="Gene3D" id="3.30.2300.20">
    <property type="match status" value="1"/>
</dbReference>
<dbReference type="Gene3D" id="3.30.70.2810">
    <property type="match status" value="1"/>
</dbReference>
<dbReference type="Gene3D" id="3.40.50.150">
    <property type="entry name" value="Vaccinia Virus protein VP39"/>
    <property type="match status" value="1"/>
</dbReference>
<dbReference type="HAMAP" id="MF_01551">
    <property type="entry name" value="23SrRNA_methyltr_M"/>
    <property type="match status" value="1"/>
</dbReference>
<dbReference type="InterPro" id="IPR040739">
    <property type="entry name" value="RlmM_FDX"/>
</dbReference>
<dbReference type="InterPro" id="IPR048646">
    <property type="entry name" value="RlmM_THUMP-like"/>
</dbReference>
<dbReference type="InterPro" id="IPR002877">
    <property type="entry name" value="RNA_MeTrfase_FtsJ_dom"/>
</dbReference>
<dbReference type="InterPro" id="IPR011224">
    <property type="entry name" value="rRNA_MeTrfase_M"/>
</dbReference>
<dbReference type="InterPro" id="IPR029063">
    <property type="entry name" value="SAM-dependent_MTases_sf"/>
</dbReference>
<dbReference type="NCBIfam" id="NF008734">
    <property type="entry name" value="PRK11760.1"/>
    <property type="match status" value="1"/>
</dbReference>
<dbReference type="PANTHER" id="PTHR37524">
    <property type="entry name" value="RIBOSOMAL RNA LARGE SUBUNIT METHYLTRANSFERASE M"/>
    <property type="match status" value="1"/>
</dbReference>
<dbReference type="PANTHER" id="PTHR37524:SF2">
    <property type="entry name" value="RIBOSOMAL RNA METHYLTRANSFERASE FTSJ DOMAIN-CONTAINING PROTEIN"/>
    <property type="match status" value="1"/>
</dbReference>
<dbReference type="Pfam" id="PF01728">
    <property type="entry name" value="FtsJ"/>
    <property type="match status" value="1"/>
</dbReference>
<dbReference type="Pfam" id="PF18125">
    <property type="entry name" value="RlmM_FDX"/>
    <property type="match status" value="1"/>
</dbReference>
<dbReference type="Pfam" id="PF21239">
    <property type="entry name" value="RLMM_N"/>
    <property type="match status" value="1"/>
</dbReference>
<dbReference type="PIRSF" id="PIRSF028774">
    <property type="entry name" value="UCP028774"/>
    <property type="match status" value="1"/>
</dbReference>
<dbReference type="SUPFAM" id="SSF53335">
    <property type="entry name" value="S-adenosyl-L-methionine-dependent methyltransferases"/>
    <property type="match status" value="1"/>
</dbReference>
<reference key="1">
    <citation type="submission" date="2002-12" db="EMBL/GenBank/DDBJ databases">
        <title>Complete genome sequence of Vibrio vulnificus CMCP6.</title>
        <authorList>
            <person name="Rhee J.H."/>
            <person name="Kim S.Y."/>
            <person name="Chung S.S."/>
            <person name="Kim J.J."/>
            <person name="Moon Y.H."/>
            <person name="Jeong H."/>
            <person name="Choy H.E."/>
        </authorList>
    </citation>
    <scope>NUCLEOTIDE SEQUENCE [LARGE SCALE GENOMIC DNA]</scope>
    <source>
        <strain>CMCP6</strain>
    </source>
</reference>
<organism>
    <name type="scientific">Vibrio vulnificus (strain CMCP6)</name>
    <dbReference type="NCBI Taxonomy" id="216895"/>
    <lineage>
        <taxon>Bacteria</taxon>
        <taxon>Pseudomonadati</taxon>
        <taxon>Pseudomonadota</taxon>
        <taxon>Gammaproteobacteria</taxon>
        <taxon>Vibrionales</taxon>
        <taxon>Vibrionaceae</taxon>
        <taxon>Vibrio</taxon>
    </lineage>
</organism>
<name>RLMM_VIBVU</name>
<comment type="function">
    <text evidence="1">Catalyzes the 2'-O-methylation at nucleotide C2498 in 23S rRNA.</text>
</comment>
<comment type="catalytic activity">
    <reaction evidence="1">
        <text>cytidine(2498) in 23S rRNA + S-adenosyl-L-methionine = 2'-O-methylcytidine(2498) in 23S rRNA + S-adenosyl-L-homocysteine + H(+)</text>
        <dbReference type="Rhea" id="RHEA:42788"/>
        <dbReference type="Rhea" id="RHEA-COMP:10244"/>
        <dbReference type="Rhea" id="RHEA-COMP:10245"/>
        <dbReference type="ChEBI" id="CHEBI:15378"/>
        <dbReference type="ChEBI" id="CHEBI:57856"/>
        <dbReference type="ChEBI" id="CHEBI:59789"/>
        <dbReference type="ChEBI" id="CHEBI:74495"/>
        <dbReference type="ChEBI" id="CHEBI:82748"/>
        <dbReference type="EC" id="2.1.1.186"/>
    </reaction>
</comment>
<comment type="subunit">
    <text evidence="1">Monomer.</text>
</comment>
<comment type="subcellular location">
    <subcellularLocation>
        <location evidence="1">Cytoplasm</location>
    </subcellularLocation>
</comment>
<comment type="similarity">
    <text evidence="1">Belongs to the class I-like SAM-binding methyltransferase superfamily. RNA methyltransferase RlmE family. RlmM subfamily.</text>
</comment>
<feature type="chain" id="PRO_0000070431" description="Ribosomal RNA large subunit methyltransferase M">
    <location>
        <begin position="1"/>
        <end position="363"/>
    </location>
</feature>
<feature type="active site" description="Proton acceptor" evidence="1">
    <location>
        <position position="308"/>
    </location>
</feature>
<feature type="binding site" evidence="1">
    <location>
        <position position="190"/>
    </location>
    <ligand>
        <name>S-adenosyl-L-methionine</name>
        <dbReference type="ChEBI" id="CHEBI:59789"/>
    </ligand>
</feature>
<feature type="binding site" evidence="1">
    <location>
        <begin position="223"/>
        <end position="226"/>
    </location>
    <ligand>
        <name>S-adenosyl-L-methionine</name>
        <dbReference type="ChEBI" id="CHEBI:59789"/>
    </ligand>
</feature>
<feature type="binding site" evidence="1">
    <location>
        <position position="242"/>
    </location>
    <ligand>
        <name>S-adenosyl-L-methionine</name>
        <dbReference type="ChEBI" id="CHEBI:59789"/>
    </ligand>
</feature>
<feature type="binding site" evidence="1">
    <location>
        <position position="262"/>
    </location>
    <ligand>
        <name>S-adenosyl-L-methionine</name>
        <dbReference type="ChEBI" id="CHEBI:59789"/>
    </ligand>
</feature>
<feature type="binding site" evidence="1">
    <location>
        <position position="279"/>
    </location>
    <ligand>
        <name>S-adenosyl-L-methionine</name>
        <dbReference type="ChEBI" id="CHEBI:59789"/>
    </ligand>
</feature>